<reference key="1">
    <citation type="journal article" date="2009" name="PLoS ONE">
        <title>Salmonella paratyphi C: genetic divergence from Salmonella choleraesuis and pathogenic convergence with Salmonella typhi.</title>
        <authorList>
            <person name="Liu W.-Q."/>
            <person name="Feng Y."/>
            <person name="Wang Y."/>
            <person name="Zou Q.-H."/>
            <person name="Chen F."/>
            <person name="Guo J.-T."/>
            <person name="Peng Y.-H."/>
            <person name="Jin Y."/>
            <person name="Li Y.-G."/>
            <person name="Hu S.-N."/>
            <person name="Johnston R.N."/>
            <person name="Liu G.-R."/>
            <person name="Liu S.-L."/>
        </authorList>
    </citation>
    <scope>NUCLEOTIDE SEQUENCE [LARGE SCALE GENOMIC DNA]</scope>
    <source>
        <strain>RKS4594</strain>
    </source>
</reference>
<accession>C0Q1R0</accession>
<dbReference type="EC" id="2.4.2.21" evidence="1"/>
<dbReference type="EMBL" id="CP000857">
    <property type="protein sequence ID" value="ACN45846.1"/>
    <property type="molecule type" value="Genomic_DNA"/>
</dbReference>
<dbReference type="RefSeq" id="WP_001193975.1">
    <property type="nucleotide sequence ID" value="NC_012125.1"/>
</dbReference>
<dbReference type="SMR" id="C0Q1R0"/>
<dbReference type="KEGG" id="sei:SPC_1699"/>
<dbReference type="HOGENOM" id="CLU_002982_0_0_6"/>
<dbReference type="UniPathway" id="UPA00061">
    <property type="reaction ID" value="UER00516"/>
</dbReference>
<dbReference type="Proteomes" id="UP000001599">
    <property type="component" value="Chromosome"/>
</dbReference>
<dbReference type="GO" id="GO:0008939">
    <property type="term" value="F:nicotinate-nucleotide-dimethylbenzimidazole phosphoribosyltransferase activity"/>
    <property type="evidence" value="ECO:0007669"/>
    <property type="project" value="UniProtKB-UniRule"/>
</dbReference>
<dbReference type="GO" id="GO:0009236">
    <property type="term" value="P:cobalamin biosynthetic process"/>
    <property type="evidence" value="ECO:0007669"/>
    <property type="project" value="UniProtKB-KW"/>
</dbReference>
<dbReference type="CDD" id="cd02439">
    <property type="entry name" value="DMB-PRT_CobT"/>
    <property type="match status" value="1"/>
</dbReference>
<dbReference type="FunFam" id="1.10.1610.10:FF:000001">
    <property type="entry name" value="Nicotinate-nucleotide--dimethylbenzimidazole phosphoribosyltransferase"/>
    <property type="match status" value="1"/>
</dbReference>
<dbReference type="FunFam" id="3.40.50.10210:FF:000001">
    <property type="entry name" value="Nicotinate-nucleotide--dimethylbenzimidazole phosphoribosyltransferase"/>
    <property type="match status" value="1"/>
</dbReference>
<dbReference type="Gene3D" id="1.10.1610.10">
    <property type="match status" value="1"/>
</dbReference>
<dbReference type="Gene3D" id="3.40.50.10210">
    <property type="match status" value="1"/>
</dbReference>
<dbReference type="HAMAP" id="MF_00230">
    <property type="entry name" value="CobT"/>
    <property type="match status" value="1"/>
</dbReference>
<dbReference type="InterPro" id="IPR003200">
    <property type="entry name" value="Nict_dMeBzImd_PRibTrfase"/>
</dbReference>
<dbReference type="InterPro" id="IPR017846">
    <property type="entry name" value="Nict_dMeBzImd_PRibTrfase_bact"/>
</dbReference>
<dbReference type="InterPro" id="IPR023195">
    <property type="entry name" value="Nict_dMeBzImd_PRibTrfase_N"/>
</dbReference>
<dbReference type="InterPro" id="IPR036087">
    <property type="entry name" value="Nict_dMeBzImd_PRibTrfase_sf"/>
</dbReference>
<dbReference type="NCBIfam" id="TIGR03160">
    <property type="entry name" value="cobT_DBIPRT"/>
    <property type="match status" value="1"/>
</dbReference>
<dbReference type="NCBIfam" id="NF000996">
    <property type="entry name" value="PRK00105.1"/>
    <property type="match status" value="1"/>
</dbReference>
<dbReference type="PANTHER" id="PTHR43463">
    <property type="entry name" value="NICOTINATE-NUCLEOTIDE--DIMETHYLBENZIMIDAZOLE PHOSPHORIBOSYLTRANSFERASE"/>
    <property type="match status" value="1"/>
</dbReference>
<dbReference type="PANTHER" id="PTHR43463:SF1">
    <property type="entry name" value="NICOTINATE-NUCLEOTIDE--DIMETHYLBENZIMIDAZOLE PHOSPHORIBOSYLTRANSFERASE"/>
    <property type="match status" value="1"/>
</dbReference>
<dbReference type="Pfam" id="PF02277">
    <property type="entry name" value="DBI_PRT"/>
    <property type="match status" value="1"/>
</dbReference>
<dbReference type="SUPFAM" id="SSF52733">
    <property type="entry name" value="Nicotinate mononucleotide:5,6-dimethylbenzimidazole phosphoribosyltransferase (CobT)"/>
    <property type="match status" value="1"/>
</dbReference>
<name>COBT_SALPC</name>
<protein>
    <recommendedName>
        <fullName evidence="1">Nicotinate-nucleotide--dimethylbenzimidazole phosphoribosyltransferase</fullName>
        <shortName evidence="1">NN:DBI PRT</shortName>
        <ecNumber evidence="1">2.4.2.21</ecNumber>
    </recommendedName>
    <alternativeName>
        <fullName evidence="1">N(1)-alpha-phosphoribosyltransferase</fullName>
    </alternativeName>
</protein>
<gene>
    <name evidence="1" type="primary">cobT</name>
    <name type="ordered locus">SPC_1699</name>
</gene>
<keyword id="KW-0169">Cobalamin biosynthesis</keyword>
<keyword id="KW-0328">Glycosyltransferase</keyword>
<keyword id="KW-0808">Transferase</keyword>
<organism>
    <name type="scientific">Salmonella paratyphi C (strain RKS4594)</name>
    <dbReference type="NCBI Taxonomy" id="476213"/>
    <lineage>
        <taxon>Bacteria</taxon>
        <taxon>Pseudomonadati</taxon>
        <taxon>Pseudomonadota</taxon>
        <taxon>Gammaproteobacteria</taxon>
        <taxon>Enterobacterales</taxon>
        <taxon>Enterobacteriaceae</taxon>
        <taxon>Salmonella</taxon>
    </lineage>
</organism>
<evidence type="ECO:0000255" key="1">
    <source>
        <dbReference type="HAMAP-Rule" id="MF_00230"/>
    </source>
</evidence>
<sequence length="356" mass="36559">MQTLHALLRDIPAPDAEAMARAQQHIDGLLKPPGSLGRLETLAVQLAGMPGLNGTPQVGEKAVLVMCADHGVWDEGVAVSPKIVTAIQAANMTQGTTGVCVLAAQAGAKVHVIDVGIDAEPIPGVVNMRVARGCGNIAVGPAMSRSQAEALLLEVSRYTCDLAQRGVTLFGVGELGMANTTPAAAMVSVFTGSDAKEVVGIGANLPPSRIDNKVDVVRRAIAINQPNPRDGIDVLSKVGGFDLVGMTGVMLGAARCGLPVLLDGFLSYSAALAACQIAPAVRPYLIPSHFSAEKGARIALAHLSMEPYLHMAMRLGEGSGAALAMPIVEAACAMFHNMGELAASNIVLPEGNANAT</sequence>
<feature type="chain" id="PRO_1000125113" description="Nicotinate-nucleotide--dimethylbenzimidazole phosphoribosyltransferase">
    <location>
        <begin position="1"/>
        <end position="356"/>
    </location>
</feature>
<feature type="active site" description="Proton acceptor" evidence="1">
    <location>
        <position position="317"/>
    </location>
</feature>
<comment type="function">
    <text evidence="1">Catalyzes the synthesis of alpha-ribazole-5'-phosphate from nicotinate mononucleotide (NAMN) and 5,6-dimethylbenzimidazole (DMB).</text>
</comment>
<comment type="catalytic activity">
    <reaction evidence="1">
        <text>5,6-dimethylbenzimidazole + nicotinate beta-D-ribonucleotide = alpha-ribazole 5'-phosphate + nicotinate + H(+)</text>
        <dbReference type="Rhea" id="RHEA:11196"/>
        <dbReference type="ChEBI" id="CHEBI:15378"/>
        <dbReference type="ChEBI" id="CHEBI:15890"/>
        <dbReference type="ChEBI" id="CHEBI:32544"/>
        <dbReference type="ChEBI" id="CHEBI:57502"/>
        <dbReference type="ChEBI" id="CHEBI:57918"/>
        <dbReference type="EC" id="2.4.2.21"/>
    </reaction>
</comment>
<comment type="pathway">
    <text evidence="1">Nucleoside biosynthesis; alpha-ribazole biosynthesis; alpha-ribazole from 5,6-dimethylbenzimidazole: step 1/2.</text>
</comment>
<comment type="subunit">
    <text evidence="1">Homodimer.</text>
</comment>
<comment type="similarity">
    <text evidence="1">Belongs to the CobT family.</text>
</comment>
<proteinExistence type="inferred from homology"/>